<organism>
    <name type="scientific">Streptomyces coelicolor (strain ATCC BAA-471 / A3(2) / M145)</name>
    <dbReference type="NCBI Taxonomy" id="100226"/>
    <lineage>
        <taxon>Bacteria</taxon>
        <taxon>Bacillati</taxon>
        <taxon>Actinomycetota</taxon>
        <taxon>Actinomycetes</taxon>
        <taxon>Kitasatosporales</taxon>
        <taxon>Streptomycetaceae</taxon>
        <taxon>Streptomyces</taxon>
        <taxon>Streptomyces albidoflavus group</taxon>
    </lineage>
</organism>
<keyword id="KW-0030">Aminoacyl-tRNA synthetase</keyword>
<keyword id="KW-0067">ATP-binding</keyword>
<keyword id="KW-0963">Cytoplasm</keyword>
<keyword id="KW-0436">Ligase</keyword>
<keyword id="KW-0547">Nucleotide-binding</keyword>
<keyword id="KW-0648">Protein biosynthesis</keyword>
<keyword id="KW-1185">Reference proteome</keyword>
<evidence type="ECO:0000250" key="1"/>
<evidence type="ECO:0000305" key="2"/>
<comment type="catalytic activity">
    <reaction>
        <text>tRNA(Arg) + L-arginine + ATP = L-arginyl-tRNA(Arg) + AMP + diphosphate</text>
        <dbReference type="Rhea" id="RHEA:20301"/>
        <dbReference type="Rhea" id="RHEA-COMP:9658"/>
        <dbReference type="Rhea" id="RHEA-COMP:9673"/>
        <dbReference type="ChEBI" id="CHEBI:30616"/>
        <dbReference type="ChEBI" id="CHEBI:32682"/>
        <dbReference type="ChEBI" id="CHEBI:33019"/>
        <dbReference type="ChEBI" id="CHEBI:78442"/>
        <dbReference type="ChEBI" id="CHEBI:78513"/>
        <dbReference type="ChEBI" id="CHEBI:456215"/>
        <dbReference type="EC" id="6.1.1.19"/>
    </reaction>
</comment>
<comment type="subunit">
    <text evidence="1">Monomer.</text>
</comment>
<comment type="subcellular location">
    <subcellularLocation>
        <location evidence="1">Cytoplasm</location>
    </subcellularLocation>
</comment>
<comment type="similarity">
    <text evidence="2">Belongs to the class-I aminoacyl-tRNA synthetase family.</text>
</comment>
<dbReference type="EC" id="6.1.1.19"/>
<dbReference type="EMBL" id="AL939116">
    <property type="protein sequence ID" value="CAB45338.1"/>
    <property type="molecule type" value="Genomic_DNA"/>
</dbReference>
<dbReference type="PIR" id="T36252">
    <property type="entry name" value="T36252"/>
</dbReference>
<dbReference type="RefSeq" id="NP_627514.1">
    <property type="nucleotide sequence ID" value="NC_003888.3"/>
</dbReference>
<dbReference type="RefSeq" id="WP_011028896.1">
    <property type="nucleotide sequence ID" value="NZ_VNID01000025.1"/>
</dbReference>
<dbReference type="SMR" id="Q9WX29"/>
<dbReference type="STRING" id="100226.gene:17760923"/>
<dbReference type="PaxDb" id="100226-SCO3304"/>
<dbReference type="KEGG" id="sco:SCO3304"/>
<dbReference type="PATRIC" id="fig|100226.15.peg.3365"/>
<dbReference type="eggNOG" id="COG0018">
    <property type="taxonomic scope" value="Bacteria"/>
</dbReference>
<dbReference type="HOGENOM" id="CLU_006406_5_1_11"/>
<dbReference type="InParanoid" id="Q9WX29"/>
<dbReference type="OrthoDB" id="9803211at2"/>
<dbReference type="PhylomeDB" id="Q9WX29"/>
<dbReference type="Proteomes" id="UP000001973">
    <property type="component" value="Chromosome"/>
</dbReference>
<dbReference type="GO" id="GO:0005737">
    <property type="term" value="C:cytoplasm"/>
    <property type="evidence" value="ECO:0007669"/>
    <property type="project" value="UniProtKB-SubCell"/>
</dbReference>
<dbReference type="GO" id="GO:0004814">
    <property type="term" value="F:arginine-tRNA ligase activity"/>
    <property type="evidence" value="ECO:0000318"/>
    <property type="project" value="GO_Central"/>
</dbReference>
<dbReference type="GO" id="GO:0005524">
    <property type="term" value="F:ATP binding"/>
    <property type="evidence" value="ECO:0007669"/>
    <property type="project" value="UniProtKB-UniRule"/>
</dbReference>
<dbReference type="GO" id="GO:0006420">
    <property type="term" value="P:arginyl-tRNA aminoacylation"/>
    <property type="evidence" value="ECO:0000318"/>
    <property type="project" value="GO_Central"/>
</dbReference>
<dbReference type="CDD" id="cd07956">
    <property type="entry name" value="Anticodon_Ia_Arg"/>
    <property type="match status" value="1"/>
</dbReference>
<dbReference type="CDD" id="cd00671">
    <property type="entry name" value="ArgRS_core"/>
    <property type="match status" value="1"/>
</dbReference>
<dbReference type="FunFam" id="1.10.730.10:FF:000008">
    <property type="entry name" value="Arginine--tRNA ligase"/>
    <property type="match status" value="1"/>
</dbReference>
<dbReference type="FunFam" id="3.40.50.620:FF:000030">
    <property type="entry name" value="Arginine--tRNA ligase"/>
    <property type="match status" value="1"/>
</dbReference>
<dbReference type="Gene3D" id="3.30.1360.70">
    <property type="entry name" value="Arginyl tRNA synthetase N-terminal domain"/>
    <property type="match status" value="1"/>
</dbReference>
<dbReference type="Gene3D" id="3.40.50.620">
    <property type="entry name" value="HUPs"/>
    <property type="match status" value="1"/>
</dbReference>
<dbReference type="Gene3D" id="1.10.730.10">
    <property type="entry name" value="Isoleucyl-tRNA Synthetase, Domain 1"/>
    <property type="match status" value="1"/>
</dbReference>
<dbReference type="HAMAP" id="MF_00123">
    <property type="entry name" value="Arg_tRNA_synth"/>
    <property type="match status" value="1"/>
</dbReference>
<dbReference type="InterPro" id="IPR001412">
    <property type="entry name" value="aa-tRNA-synth_I_CS"/>
</dbReference>
<dbReference type="InterPro" id="IPR001278">
    <property type="entry name" value="Arg-tRNA-ligase"/>
</dbReference>
<dbReference type="InterPro" id="IPR005148">
    <property type="entry name" value="Arg-tRNA-synth_N"/>
</dbReference>
<dbReference type="InterPro" id="IPR036695">
    <property type="entry name" value="Arg-tRNA-synth_N_sf"/>
</dbReference>
<dbReference type="InterPro" id="IPR035684">
    <property type="entry name" value="ArgRS_core"/>
</dbReference>
<dbReference type="InterPro" id="IPR008909">
    <property type="entry name" value="DALR_anticod-bd"/>
</dbReference>
<dbReference type="InterPro" id="IPR014729">
    <property type="entry name" value="Rossmann-like_a/b/a_fold"/>
</dbReference>
<dbReference type="InterPro" id="IPR009080">
    <property type="entry name" value="tRNAsynth_Ia_anticodon-bd"/>
</dbReference>
<dbReference type="NCBIfam" id="TIGR00456">
    <property type="entry name" value="argS"/>
    <property type="match status" value="1"/>
</dbReference>
<dbReference type="PANTHER" id="PTHR11956:SF5">
    <property type="entry name" value="ARGININE--TRNA LIGASE, CYTOPLASMIC"/>
    <property type="match status" value="1"/>
</dbReference>
<dbReference type="PANTHER" id="PTHR11956">
    <property type="entry name" value="ARGINYL-TRNA SYNTHETASE"/>
    <property type="match status" value="1"/>
</dbReference>
<dbReference type="Pfam" id="PF03485">
    <property type="entry name" value="Arg_tRNA_synt_N"/>
    <property type="match status" value="1"/>
</dbReference>
<dbReference type="Pfam" id="PF05746">
    <property type="entry name" value="DALR_1"/>
    <property type="match status" value="1"/>
</dbReference>
<dbReference type="Pfam" id="PF00750">
    <property type="entry name" value="tRNA-synt_1d"/>
    <property type="match status" value="1"/>
</dbReference>
<dbReference type="PRINTS" id="PR01038">
    <property type="entry name" value="TRNASYNTHARG"/>
</dbReference>
<dbReference type="SMART" id="SM01016">
    <property type="entry name" value="Arg_tRNA_synt_N"/>
    <property type="match status" value="1"/>
</dbReference>
<dbReference type="SMART" id="SM00836">
    <property type="entry name" value="DALR_1"/>
    <property type="match status" value="1"/>
</dbReference>
<dbReference type="SUPFAM" id="SSF47323">
    <property type="entry name" value="Anticodon-binding domain of a subclass of class I aminoacyl-tRNA synthetases"/>
    <property type="match status" value="1"/>
</dbReference>
<dbReference type="SUPFAM" id="SSF55190">
    <property type="entry name" value="Arginyl-tRNA synthetase (ArgRS), N-terminal 'additional' domain"/>
    <property type="match status" value="1"/>
</dbReference>
<dbReference type="SUPFAM" id="SSF52374">
    <property type="entry name" value="Nucleotidylyl transferase"/>
    <property type="match status" value="1"/>
</dbReference>
<dbReference type="PROSITE" id="PS00178">
    <property type="entry name" value="AA_TRNA_LIGASE_I"/>
    <property type="match status" value="1"/>
</dbReference>
<accession>Q9WX29</accession>
<protein>
    <recommendedName>
        <fullName>Arginine--tRNA ligase</fullName>
        <ecNumber>6.1.1.19</ecNumber>
    </recommendedName>
    <alternativeName>
        <fullName>Arginyl-tRNA synthetase</fullName>
        <shortName>ArgRS</shortName>
    </alternativeName>
</protein>
<name>SYR_STRCO</name>
<sequence>MASVTSLSDSVQQHLASALTATRPEAAGADPLLRRSDRADYQANGILALAKKTKANPRELAAEVVARITTGDELIEDVEVSGPGFLNITVADRAITANLAARLADGERLGVPLKQDAGTTVVDYAQPNVAKEMHVGHLRSAVIGDALRSMLDFTGEKTIGRHHIGDWGTQFGMLIQYLFEHPGELAPAGDIDGEQAMSNLNRVYKASRAVFDTDEEFKERARRRVVALQSGDKETLDLWQQFVDESKVYFYSVFEKLDMEIRDEEIVGESAYNDGMPETARLLEEMGVAVRSEGALVVFFDEIRGKDDQPVPLIVQKADGGFGYAASDLTAIRNRVQDLHATTLLYVVDVRQSLHFRMVFETARRAGWLGDEVTAHNMGYGTVLGADGKPFKTRAGETVRLEDLLDEAVQRAAEVVREKARDLTEDEIQERAAQVGIGAVKYADLSTSPNRDYKFDLDQMVSLNGDTSVYLQYAYARIQSILRKAGEVRPAAHPELALHEAERALGLHLDAFGPTVFEAAAEYAPHKLAAYLYQLASLYTTFYDKCPVLKAETPEQVENRLFLCDLTARTLHRGMALLGIRTPERL</sequence>
<feature type="chain" id="PRO_0000151616" description="Arginine--tRNA ligase">
    <location>
        <begin position="1"/>
        <end position="586"/>
    </location>
</feature>
<feature type="short sequence motif" description="'HIGH' region">
    <location>
        <begin position="127"/>
        <end position="137"/>
    </location>
</feature>
<proteinExistence type="inferred from homology"/>
<gene>
    <name type="primary">argS</name>
    <name type="ordered locus">SCO3304</name>
    <name type="ORF">SCE68.02</name>
</gene>
<reference key="1">
    <citation type="journal article" date="2002" name="Nature">
        <title>Complete genome sequence of the model actinomycete Streptomyces coelicolor A3(2).</title>
        <authorList>
            <person name="Bentley S.D."/>
            <person name="Chater K.F."/>
            <person name="Cerdeno-Tarraga A.-M."/>
            <person name="Challis G.L."/>
            <person name="Thomson N.R."/>
            <person name="James K.D."/>
            <person name="Harris D.E."/>
            <person name="Quail M.A."/>
            <person name="Kieser H."/>
            <person name="Harper D."/>
            <person name="Bateman A."/>
            <person name="Brown S."/>
            <person name="Chandra G."/>
            <person name="Chen C.W."/>
            <person name="Collins M."/>
            <person name="Cronin A."/>
            <person name="Fraser A."/>
            <person name="Goble A."/>
            <person name="Hidalgo J."/>
            <person name="Hornsby T."/>
            <person name="Howarth S."/>
            <person name="Huang C.-H."/>
            <person name="Kieser T."/>
            <person name="Larke L."/>
            <person name="Murphy L.D."/>
            <person name="Oliver K."/>
            <person name="O'Neil S."/>
            <person name="Rabbinowitsch E."/>
            <person name="Rajandream M.A."/>
            <person name="Rutherford K.M."/>
            <person name="Rutter S."/>
            <person name="Seeger K."/>
            <person name="Saunders D."/>
            <person name="Sharp S."/>
            <person name="Squares R."/>
            <person name="Squares S."/>
            <person name="Taylor K."/>
            <person name="Warren T."/>
            <person name="Wietzorrek A."/>
            <person name="Woodward J.R."/>
            <person name="Barrell B.G."/>
            <person name="Parkhill J."/>
            <person name="Hopwood D.A."/>
        </authorList>
    </citation>
    <scope>NUCLEOTIDE SEQUENCE [LARGE SCALE GENOMIC DNA]</scope>
    <source>
        <strain>ATCC BAA-471 / A3(2) / M145</strain>
    </source>
</reference>